<reference key="1">
    <citation type="journal article" date="2008" name="PLoS ONE">
        <title>Genome sequence of Brucella abortus vaccine strain S19 compared to virulent strains yields candidate virulence genes.</title>
        <authorList>
            <person name="Crasta O.R."/>
            <person name="Folkerts O."/>
            <person name="Fei Z."/>
            <person name="Mane S.P."/>
            <person name="Evans C."/>
            <person name="Martino-Catt S."/>
            <person name="Bricker B."/>
            <person name="Yu G."/>
            <person name="Du L."/>
            <person name="Sobral B.W."/>
        </authorList>
    </citation>
    <scope>NUCLEOTIDE SEQUENCE [LARGE SCALE GENOMIC DNA]</scope>
    <source>
        <strain>S19</strain>
    </source>
</reference>
<evidence type="ECO:0000255" key="1">
    <source>
        <dbReference type="HAMAP-Rule" id="MF_00137"/>
    </source>
</evidence>
<accession>B2S578</accession>
<protein>
    <recommendedName>
        <fullName evidence="1">Phosphoribosylaminoimidazole-succinocarboxamide synthase</fullName>
        <ecNumber evidence="1">6.3.2.6</ecNumber>
    </recommendedName>
    <alternativeName>
        <fullName evidence="1">SAICAR synthetase</fullName>
    </alternativeName>
</protein>
<keyword id="KW-0067">ATP-binding</keyword>
<keyword id="KW-0436">Ligase</keyword>
<keyword id="KW-0547">Nucleotide-binding</keyword>
<keyword id="KW-0658">Purine biosynthesis</keyword>
<organism>
    <name type="scientific">Brucella abortus (strain S19)</name>
    <dbReference type="NCBI Taxonomy" id="430066"/>
    <lineage>
        <taxon>Bacteria</taxon>
        <taxon>Pseudomonadati</taxon>
        <taxon>Pseudomonadota</taxon>
        <taxon>Alphaproteobacteria</taxon>
        <taxon>Hyphomicrobiales</taxon>
        <taxon>Brucellaceae</taxon>
        <taxon>Brucella/Ochrobactrum group</taxon>
        <taxon>Brucella</taxon>
    </lineage>
</organism>
<feature type="chain" id="PRO_1000095967" description="Phosphoribosylaminoimidazole-succinocarboxamide synthase">
    <location>
        <begin position="1"/>
        <end position="254"/>
    </location>
</feature>
<gene>
    <name evidence="1" type="primary">purC</name>
    <name type="ordered locus">BAbS19_I08040</name>
</gene>
<dbReference type="EC" id="6.3.2.6" evidence="1"/>
<dbReference type="EMBL" id="CP000887">
    <property type="protein sequence ID" value="ACD72325.1"/>
    <property type="molecule type" value="Genomic_DNA"/>
</dbReference>
<dbReference type="RefSeq" id="WP_002966778.1">
    <property type="nucleotide sequence ID" value="NC_010742.1"/>
</dbReference>
<dbReference type="SMR" id="B2S578"/>
<dbReference type="GeneID" id="93016776"/>
<dbReference type="KEGG" id="bmc:BAbS19_I08040"/>
<dbReference type="HOGENOM" id="CLU_061495_2_0_5"/>
<dbReference type="UniPathway" id="UPA00074">
    <property type="reaction ID" value="UER00131"/>
</dbReference>
<dbReference type="Proteomes" id="UP000002565">
    <property type="component" value="Chromosome 1"/>
</dbReference>
<dbReference type="GO" id="GO:0005829">
    <property type="term" value="C:cytosol"/>
    <property type="evidence" value="ECO:0007669"/>
    <property type="project" value="TreeGrafter"/>
</dbReference>
<dbReference type="GO" id="GO:0005524">
    <property type="term" value="F:ATP binding"/>
    <property type="evidence" value="ECO:0007669"/>
    <property type="project" value="UniProtKB-KW"/>
</dbReference>
<dbReference type="GO" id="GO:0004639">
    <property type="term" value="F:phosphoribosylaminoimidazolesuccinocarboxamide synthase activity"/>
    <property type="evidence" value="ECO:0007669"/>
    <property type="project" value="UniProtKB-UniRule"/>
</dbReference>
<dbReference type="GO" id="GO:0006189">
    <property type="term" value="P:'de novo' IMP biosynthetic process"/>
    <property type="evidence" value="ECO:0007669"/>
    <property type="project" value="UniProtKB-UniRule"/>
</dbReference>
<dbReference type="GO" id="GO:0009236">
    <property type="term" value="P:cobalamin biosynthetic process"/>
    <property type="evidence" value="ECO:0007669"/>
    <property type="project" value="InterPro"/>
</dbReference>
<dbReference type="CDD" id="cd01415">
    <property type="entry name" value="SAICAR_synt_PurC"/>
    <property type="match status" value="1"/>
</dbReference>
<dbReference type="FunFam" id="3.30.470.20:FF:000006">
    <property type="entry name" value="Phosphoribosylaminoimidazole-succinocarboxamide synthase"/>
    <property type="match status" value="1"/>
</dbReference>
<dbReference type="Gene3D" id="3.30.470.20">
    <property type="entry name" value="ATP-grasp fold, B domain"/>
    <property type="match status" value="1"/>
</dbReference>
<dbReference type="Gene3D" id="3.30.200.20">
    <property type="entry name" value="Phosphorylase Kinase, domain 1"/>
    <property type="match status" value="1"/>
</dbReference>
<dbReference type="HAMAP" id="MF_00137">
    <property type="entry name" value="SAICAR_synth"/>
    <property type="match status" value="1"/>
</dbReference>
<dbReference type="InterPro" id="IPR028923">
    <property type="entry name" value="SAICAR_synt/ADE2_N"/>
</dbReference>
<dbReference type="InterPro" id="IPR033934">
    <property type="entry name" value="SAICAR_synt_PurC"/>
</dbReference>
<dbReference type="InterPro" id="IPR001636">
    <property type="entry name" value="SAICAR_synth"/>
</dbReference>
<dbReference type="InterPro" id="IPR050089">
    <property type="entry name" value="SAICAR_synthetase"/>
</dbReference>
<dbReference type="InterPro" id="IPR018236">
    <property type="entry name" value="SAICAR_synthetase_CS"/>
</dbReference>
<dbReference type="NCBIfam" id="TIGR00081">
    <property type="entry name" value="purC"/>
    <property type="match status" value="1"/>
</dbReference>
<dbReference type="PANTHER" id="PTHR43599">
    <property type="entry name" value="MULTIFUNCTIONAL PROTEIN ADE2"/>
    <property type="match status" value="1"/>
</dbReference>
<dbReference type="PANTHER" id="PTHR43599:SF3">
    <property type="entry name" value="SI:DKEY-6E2.2"/>
    <property type="match status" value="1"/>
</dbReference>
<dbReference type="Pfam" id="PF01259">
    <property type="entry name" value="SAICAR_synt"/>
    <property type="match status" value="1"/>
</dbReference>
<dbReference type="SUPFAM" id="SSF56104">
    <property type="entry name" value="SAICAR synthase-like"/>
    <property type="match status" value="1"/>
</dbReference>
<dbReference type="PROSITE" id="PS01057">
    <property type="entry name" value="SAICAR_SYNTHETASE_1"/>
    <property type="match status" value="1"/>
</dbReference>
<comment type="catalytic activity">
    <reaction evidence="1">
        <text>5-amino-1-(5-phospho-D-ribosyl)imidazole-4-carboxylate + L-aspartate + ATP = (2S)-2-[5-amino-1-(5-phospho-beta-D-ribosyl)imidazole-4-carboxamido]succinate + ADP + phosphate + 2 H(+)</text>
        <dbReference type="Rhea" id="RHEA:22628"/>
        <dbReference type="ChEBI" id="CHEBI:15378"/>
        <dbReference type="ChEBI" id="CHEBI:29991"/>
        <dbReference type="ChEBI" id="CHEBI:30616"/>
        <dbReference type="ChEBI" id="CHEBI:43474"/>
        <dbReference type="ChEBI" id="CHEBI:58443"/>
        <dbReference type="ChEBI" id="CHEBI:77657"/>
        <dbReference type="ChEBI" id="CHEBI:456216"/>
        <dbReference type="EC" id="6.3.2.6"/>
    </reaction>
</comment>
<comment type="pathway">
    <text evidence="1">Purine metabolism; IMP biosynthesis via de novo pathway; 5-amino-1-(5-phospho-D-ribosyl)imidazole-4-carboxamide from 5-amino-1-(5-phospho-D-ribosyl)imidazole-4-carboxylate: step 1/2.</text>
</comment>
<comment type="similarity">
    <text evidence="1">Belongs to the SAICAR synthetase family.</text>
</comment>
<sequence length="254" mass="28936">MNRRRRIYEGKAKILYEGPEPGTLVQFFKDDATAFNAKKHEVIDGKGVLNNRISEHIFTQLNRIGIPTHFIRRLNMREQLIKEVEIIPLEVVVRNVAAGSLAKHLGLEEGTILPRSIIEFYYKADALNDPMVTEEHITAFGWASPQEIDDIMALAIRVNDFLTGLFLGIGIQLVDFKMECGRLWEGDMMRIVVADEISPDSARLWDITTNDKLDKDRFRRDMGGLVEAYQEVARRLGIMNENDTPRPSGPTLVK</sequence>
<name>PUR7_BRUA1</name>
<proteinExistence type="inferred from homology"/>